<comment type="function">
    <text evidence="1">Cell division inhibitor that blocks the formation of polar Z ring septums. Rapidly oscillates between the poles of the cell to destabilize FtsZ filaments that have formed before they mature into polar Z rings. Prevents FtsZ polymerization.</text>
</comment>
<comment type="subunit">
    <text evidence="1">Interacts with MinD and FtsZ.</text>
</comment>
<comment type="similarity">
    <text evidence="1">Belongs to the MinC family.</text>
</comment>
<protein>
    <recommendedName>
        <fullName evidence="1">Probable septum site-determining protein MinC</fullName>
    </recommendedName>
</protein>
<dbReference type="EMBL" id="CP000238">
    <property type="protein sequence ID" value="ABF13952.1"/>
    <property type="molecule type" value="Genomic_DNA"/>
</dbReference>
<dbReference type="RefSeq" id="WP_011520618.1">
    <property type="nucleotide sequence ID" value="NC_007984.1"/>
</dbReference>
<dbReference type="SMR" id="Q1LT29"/>
<dbReference type="STRING" id="374463.BCI_0444"/>
<dbReference type="KEGG" id="bci:BCI_0444"/>
<dbReference type="HOGENOM" id="CLU_067812_0_1_6"/>
<dbReference type="OrthoDB" id="9794530at2"/>
<dbReference type="Proteomes" id="UP000002427">
    <property type="component" value="Chromosome"/>
</dbReference>
<dbReference type="GO" id="GO:0000902">
    <property type="term" value="P:cell morphogenesis"/>
    <property type="evidence" value="ECO:0007669"/>
    <property type="project" value="InterPro"/>
</dbReference>
<dbReference type="GO" id="GO:0000917">
    <property type="term" value="P:division septum assembly"/>
    <property type="evidence" value="ECO:0007669"/>
    <property type="project" value="UniProtKB-KW"/>
</dbReference>
<dbReference type="GO" id="GO:0051302">
    <property type="term" value="P:regulation of cell division"/>
    <property type="evidence" value="ECO:0007669"/>
    <property type="project" value="InterPro"/>
</dbReference>
<dbReference type="GO" id="GO:1901891">
    <property type="term" value="P:regulation of cell septum assembly"/>
    <property type="evidence" value="ECO:0007669"/>
    <property type="project" value="InterPro"/>
</dbReference>
<dbReference type="Gene3D" id="2.160.20.70">
    <property type="match status" value="1"/>
</dbReference>
<dbReference type="Gene3D" id="3.30.70.260">
    <property type="match status" value="1"/>
</dbReference>
<dbReference type="HAMAP" id="MF_00267">
    <property type="entry name" value="MinC"/>
    <property type="match status" value="1"/>
</dbReference>
<dbReference type="InterPro" id="IPR016098">
    <property type="entry name" value="CAP/MinC_C"/>
</dbReference>
<dbReference type="InterPro" id="IPR013033">
    <property type="entry name" value="MinC"/>
</dbReference>
<dbReference type="InterPro" id="IPR036145">
    <property type="entry name" value="MinC_C_sf"/>
</dbReference>
<dbReference type="InterPro" id="IPR007874">
    <property type="entry name" value="MinC_N"/>
</dbReference>
<dbReference type="InterPro" id="IPR005526">
    <property type="entry name" value="Septum_form_inhib_MinC_C"/>
</dbReference>
<dbReference type="NCBIfam" id="TIGR01222">
    <property type="entry name" value="minC"/>
    <property type="match status" value="1"/>
</dbReference>
<dbReference type="PANTHER" id="PTHR34108">
    <property type="entry name" value="SEPTUM SITE-DETERMINING PROTEIN MINC"/>
    <property type="match status" value="1"/>
</dbReference>
<dbReference type="PANTHER" id="PTHR34108:SF1">
    <property type="entry name" value="SEPTUM SITE-DETERMINING PROTEIN MINC"/>
    <property type="match status" value="1"/>
</dbReference>
<dbReference type="Pfam" id="PF03775">
    <property type="entry name" value="MinC_C"/>
    <property type="match status" value="1"/>
</dbReference>
<dbReference type="Pfam" id="PF05209">
    <property type="entry name" value="MinC_N"/>
    <property type="match status" value="1"/>
</dbReference>
<dbReference type="SUPFAM" id="SSF63848">
    <property type="entry name" value="Cell-division inhibitor MinC, C-terminal domain"/>
    <property type="match status" value="1"/>
</dbReference>
<proteinExistence type="inferred from homology"/>
<evidence type="ECO:0000255" key="1">
    <source>
        <dbReference type="HAMAP-Rule" id="MF_00267"/>
    </source>
</evidence>
<organism>
    <name type="scientific">Baumannia cicadellinicola subsp. Homalodisca coagulata</name>
    <dbReference type="NCBI Taxonomy" id="374463"/>
    <lineage>
        <taxon>Bacteria</taxon>
        <taxon>Pseudomonadati</taxon>
        <taxon>Pseudomonadota</taxon>
        <taxon>Gammaproteobacteria</taxon>
        <taxon>Candidatus Palibaumannia</taxon>
    </lineage>
</organism>
<accession>Q1LT29</accession>
<keyword id="KW-0131">Cell cycle</keyword>
<keyword id="KW-0132">Cell division</keyword>
<keyword id="KW-1185">Reference proteome</keyword>
<keyword id="KW-0717">Septation</keyword>
<feature type="chain" id="PRO_1000047804" description="Probable septum site-determining protein MinC">
    <location>
        <begin position="1"/>
        <end position="231"/>
    </location>
</feature>
<name>MINC_BAUCH</name>
<gene>
    <name evidence="1" type="primary">minC</name>
    <name type="ordered locus">BCI_0444</name>
</gene>
<sequence length="231" mass="25006">MIHAPIDFKGSNFTLLVIHIYDAPIEVIIQAIQDKITQAPQLLKNAPVILNVASLSPECNWINLLKAILSTGLHVVAVSGCNNSTLKNDIIISGLPLITEGQTLQCSSYTTTPIKSTLSINNKTKLIHTPIRSGQQIYAKNSDLVITNNVSAGAELIADGNIHIYGMMRGRALAGASGDSHCQIFCSYLFPELVSIAGQYWIDDQIPAELLGKAGRIYLHCDALSIQPLIF</sequence>
<reference key="1">
    <citation type="journal article" date="2006" name="PLoS Biol.">
        <title>Metabolic complementarity and genomics of the dual bacterial symbiosis of sharpshooters.</title>
        <authorList>
            <person name="Wu D."/>
            <person name="Daugherty S.C."/>
            <person name="Van Aken S.E."/>
            <person name="Pai G.H."/>
            <person name="Watkins K.L."/>
            <person name="Khouri H."/>
            <person name="Tallon L.J."/>
            <person name="Zaborsky J.M."/>
            <person name="Dunbar H.E."/>
            <person name="Tran P.L."/>
            <person name="Moran N.A."/>
            <person name="Eisen J.A."/>
        </authorList>
    </citation>
    <scope>NUCLEOTIDE SEQUENCE [LARGE SCALE GENOMIC DNA]</scope>
</reference>